<feature type="chain" id="PRO_1000062497" description="Protein-export protein SecB">
    <location>
        <begin position="1"/>
        <end position="164"/>
    </location>
</feature>
<protein>
    <recommendedName>
        <fullName evidence="1">Protein-export protein SecB</fullName>
    </recommendedName>
</protein>
<reference key="1">
    <citation type="journal article" date="2008" name="Proc. Natl. Acad. Sci. U.S.A.">
        <title>Nitrogen fixation island and rhizosphere competence traits in the genome of root-associated Pseudomonas stutzeri A1501.</title>
        <authorList>
            <person name="Yan Y."/>
            <person name="Yang J."/>
            <person name="Dou Y."/>
            <person name="Chen M."/>
            <person name="Ping S."/>
            <person name="Peng J."/>
            <person name="Lu W."/>
            <person name="Zhang W."/>
            <person name="Yao Z."/>
            <person name="Li H."/>
            <person name="Liu W."/>
            <person name="He S."/>
            <person name="Geng L."/>
            <person name="Zhang X."/>
            <person name="Yang F."/>
            <person name="Yu H."/>
            <person name="Zhan Y."/>
            <person name="Li D."/>
            <person name="Lin Z."/>
            <person name="Wang Y."/>
            <person name="Elmerich C."/>
            <person name="Lin M."/>
            <person name="Jin Q."/>
        </authorList>
    </citation>
    <scope>NUCLEOTIDE SEQUENCE [LARGE SCALE GENOMIC DNA]</scope>
    <source>
        <strain>A1501</strain>
    </source>
</reference>
<dbReference type="EMBL" id="CP000304">
    <property type="protein sequence ID" value="ABP81700.1"/>
    <property type="molecule type" value="Genomic_DNA"/>
</dbReference>
<dbReference type="RefSeq" id="WP_011915080.1">
    <property type="nucleotide sequence ID" value="NC_009434.1"/>
</dbReference>
<dbReference type="SMR" id="A4VRU9"/>
<dbReference type="KEGG" id="psa:PST_4077"/>
<dbReference type="eggNOG" id="COG1952">
    <property type="taxonomic scope" value="Bacteria"/>
</dbReference>
<dbReference type="HOGENOM" id="CLU_111574_1_0_6"/>
<dbReference type="Proteomes" id="UP000000233">
    <property type="component" value="Chromosome"/>
</dbReference>
<dbReference type="GO" id="GO:0005737">
    <property type="term" value="C:cytoplasm"/>
    <property type="evidence" value="ECO:0007669"/>
    <property type="project" value="UniProtKB-SubCell"/>
</dbReference>
<dbReference type="GO" id="GO:0051082">
    <property type="term" value="F:unfolded protein binding"/>
    <property type="evidence" value="ECO:0007669"/>
    <property type="project" value="InterPro"/>
</dbReference>
<dbReference type="GO" id="GO:0006457">
    <property type="term" value="P:protein folding"/>
    <property type="evidence" value="ECO:0007669"/>
    <property type="project" value="UniProtKB-UniRule"/>
</dbReference>
<dbReference type="GO" id="GO:0051262">
    <property type="term" value="P:protein tetramerization"/>
    <property type="evidence" value="ECO:0007669"/>
    <property type="project" value="InterPro"/>
</dbReference>
<dbReference type="GO" id="GO:0015031">
    <property type="term" value="P:protein transport"/>
    <property type="evidence" value="ECO:0007669"/>
    <property type="project" value="UniProtKB-UniRule"/>
</dbReference>
<dbReference type="Gene3D" id="3.10.420.10">
    <property type="entry name" value="SecB-like"/>
    <property type="match status" value="1"/>
</dbReference>
<dbReference type="HAMAP" id="MF_00821">
    <property type="entry name" value="SecB"/>
    <property type="match status" value="1"/>
</dbReference>
<dbReference type="InterPro" id="IPR003708">
    <property type="entry name" value="SecB"/>
</dbReference>
<dbReference type="InterPro" id="IPR035958">
    <property type="entry name" value="SecB-like_sf"/>
</dbReference>
<dbReference type="NCBIfam" id="NF004393">
    <property type="entry name" value="PRK05751.1-4"/>
    <property type="match status" value="1"/>
</dbReference>
<dbReference type="NCBIfam" id="TIGR00809">
    <property type="entry name" value="secB"/>
    <property type="match status" value="1"/>
</dbReference>
<dbReference type="PANTHER" id="PTHR36918">
    <property type="match status" value="1"/>
</dbReference>
<dbReference type="PANTHER" id="PTHR36918:SF1">
    <property type="entry name" value="PROTEIN-EXPORT PROTEIN SECB"/>
    <property type="match status" value="1"/>
</dbReference>
<dbReference type="Pfam" id="PF02556">
    <property type="entry name" value="SecB"/>
    <property type="match status" value="1"/>
</dbReference>
<dbReference type="PRINTS" id="PR01594">
    <property type="entry name" value="SECBCHAPRONE"/>
</dbReference>
<dbReference type="SUPFAM" id="SSF54611">
    <property type="entry name" value="SecB-like"/>
    <property type="match status" value="1"/>
</dbReference>
<proteinExistence type="inferred from homology"/>
<gene>
    <name evidence="1" type="primary">secB</name>
    <name type="ordered locus">PST_4077</name>
</gene>
<accession>A4VRU9</accession>
<name>SECB_STUS1</name>
<keyword id="KW-0143">Chaperone</keyword>
<keyword id="KW-0963">Cytoplasm</keyword>
<keyword id="KW-0653">Protein transport</keyword>
<keyword id="KW-1185">Reference proteome</keyword>
<keyword id="KW-0811">Translocation</keyword>
<keyword id="KW-0813">Transport</keyword>
<evidence type="ECO:0000255" key="1">
    <source>
        <dbReference type="HAMAP-Rule" id="MF_00821"/>
    </source>
</evidence>
<comment type="function">
    <text evidence="1">One of the proteins required for the normal export of preproteins out of the cell cytoplasm. It is a molecular chaperone that binds to a subset of precursor proteins, maintaining them in a translocation-competent state. It also specifically binds to its receptor SecA.</text>
</comment>
<comment type="subunit">
    <text evidence="1">Homotetramer, a dimer of dimers. One homotetramer interacts with 1 SecA dimer.</text>
</comment>
<comment type="subcellular location">
    <subcellularLocation>
        <location evidence="1">Cytoplasm</location>
    </subcellularLocation>
</comment>
<comment type="similarity">
    <text evidence="1">Belongs to the SecB family.</text>
</comment>
<sequence length="164" mass="17903">MTEQANNGGAASQNEQGAQFSLQRIYVRDLSFEAPKSPEIFRQEWNPSVALDLNTKQKQLESDFYEVVLTLSVTVKTGEEVAFIAEVQQAGIFLIKGLEAAAMSHTLGAFCPNILFPYAREALDSLVTRGSFPALMLAPVNFDALYAQEMARMQSAGEAPATAH</sequence>
<organism>
    <name type="scientific">Stutzerimonas stutzeri (strain A1501)</name>
    <name type="common">Pseudomonas stutzeri</name>
    <dbReference type="NCBI Taxonomy" id="379731"/>
    <lineage>
        <taxon>Bacteria</taxon>
        <taxon>Pseudomonadati</taxon>
        <taxon>Pseudomonadota</taxon>
        <taxon>Gammaproteobacteria</taxon>
        <taxon>Pseudomonadales</taxon>
        <taxon>Pseudomonadaceae</taxon>
        <taxon>Stutzerimonas</taxon>
    </lineage>
</organism>